<gene>
    <name evidence="1" type="primary">rplC</name>
    <name type="ordered locus">Achl_2687</name>
</gene>
<keyword id="KW-0687">Ribonucleoprotein</keyword>
<keyword id="KW-0689">Ribosomal protein</keyword>
<keyword id="KW-0694">RNA-binding</keyword>
<keyword id="KW-0699">rRNA-binding</keyword>
<accession>B8HD06</accession>
<proteinExistence type="inferred from homology"/>
<dbReference type="EMBL" id="CP001341">
    <property type="protein sequence ID" value="ACL40652.1"/>
    <property type="molecule type" value="Genomic_DNA"/>
</dbReference>
<dbReference type="RefSeq" id="WP_015937852.1">
    <property type="nucleotide sequence ID" value="NC_011886.1"/>
</dbReference>
<dbReference type="SMR" id="B8HD06"/>
<dbReference type="STRING" id="452863.Achl_2687"/>
<dbReference type="KEGG" id="ach:Achl_2687"/>
<dbReference type="eggNOG" id="COG0087">
    <property type="taxonomic scope" value="Bacteria"/>
</dbReference>
<dbReference type="HOGENOM" id="CLU_044142_4_1_11"/>
<dbReference type="OrthoDB" id="9806135at2"/>
<dbReference type="Proteomes" id="UP000002505">
    <property type="component" value="Chromosome"/>
</dbReference>
<dbReference type="GO" id="GO:0022625">
    <property type="term" value="C:cytosolic large ribosomal subunit"/>
    <property type="evidence" value="ECO:0007669"/>
    <property type="project" value="TreeGrafter"/>
</dbReference>
<dbReference type="GO" id="GO:0019843">
    <property type="term" value="F:rRNA binding"/>
    <property type="evidence" value="ECO:0007669"/>
    <property type="project" value="UniProtKB-UniRule"/>
</dbReference>
<dbReference type="GO" id="GO:0003735">
    <property type="term" value="F:structural constituent of ribosome"/>
    <property type="evidence" value="ECO:0007669"/>
    <property type="project" value="InterPro"/>
</dbReference>
<dbReference type="GO" id="GO:0006412">
    <property type="term" value="P:translation"/>
    <property type="evidence" value="ECO:0007669"/>
    <property type="project" value="UniProtKB-UniRule"/>
</dbReference>
<dbReference type="FunFam" id="2.40.30.10:FF:000004">
    <property type="entry name" value="50S ribosomal protein L3"/>
    <property type="match status" value="1"/>
</dbReference>
<dbReference type="FunFam" id="3.30.160.810:FF:000001">
    <property type="entry name" value="50S ribosomal protein L3"/>
    <property type="match status" value="1"/>
</dbReference>
<dbReference type="Gene3D" id="3.30.160.810">
    <property type="match status" value="1"/>
</dbReference>
<dbReference type="Gene3D" id="2.40.30.10">
    <property type="entry name" value="Translation factors"/>
    <property type="match status" value="1"/>
</dbReference>
<dbReference type="HAMAP" id="MF_01325_B">
    <property type="entry name" value="Ribosomal_uL3_B"/>
    <property type="match status" value="1"/>
</dbReference>
<dbReference type="InterPro" id="IPR000597">
    <property type="entry name" value="Ribosomal_uL3"/>
</dbReference>
<dbReference type="InterPro" id="IPR019927">
    <property type="entry name" value="Ribosomal_uL3_bac/org-type"/>
</dbReference>
<dbReference type="InterPro" id="IPR019926">
    <property type="entry name" value="Ribosomal_uL3_CS"/>
</dbReference>
<dbReference type="InterPro" id="IPR009000">
    <property type="entry name" value="Transl_B-barrel_sf"/>
</dbReference>
<dbReference type="NCBIfam" id="TIGR03625">
    <property type="entry name" value="L3_bact"/>
    <property type="match status" value="1"/>
</dbReference>
<dbReference type="PANTHER" id="PTHR11229">
    <property type="entry name" value="50S RIBOSOMAL PROTEIN L3"/>
    <property type="match status" value="1"/>
</dbReference>
<dbReference type="PANTHER" id="PTHR11229:SF16">
    <property type="entry name" value="LARGE RIBOSOMAL SUBUNIT PROTEIN UL3C"/>
    <property type="match status" value="1"/>
</dbReference>
<dbReference type="Pfam" id="PF00297">
    <property type="entry name" value="Ribosomal_L3"/>
    <property type="match status" value="1"/>
</dbReference>
<dbReference type="SUPFAM" id="SSF50447">
    <property type="entry name" value="Translation proteins"/>
    <property type="match status" value="1"/>
</dbReference>
<dbReference type="PROSITE" id="PS00474">
    <property type="entry name" value="RIBOSOMAL_L3"/>
    <property type="match status" value="1"/>
</dbReference>
<organism>
    <name type="scientific">Pseudarthrobacter chlorophenolicus (strain ATCC 700700 / DSM 12829 / CIP 107037 / JCM 12360 / KCTC 9906 / NCIMB 13794 / A6)</name>
    <name type="common">Arthrobacter chlorophenolicus</name>
    <dbReference type="NCBI Taxonomy" id="452863"/>
    <lineage>
        <taxon>Bacteria</taxon>
        <taxon>Bacillati</taxon>
        <taxon>Actinomycetota</taxon>
        <taxon>Actinomycetes</taxon>
        <taxon>Micrococcales</taxon>
        <taxon>Micrococcaceae</taxon>
        <taxon>Pseudarthrobacter</taxon>
    </lineage>
</organism>
<evidence type="ECO:0000255" key="1">
    <source>
        <dbReference type="HAMAP-Rule" id="MF_01325"/>
    </source>
</evidence>
<evidence type="ECO:0000256" key="2">
    <source>
        <dbReference type="SAM" id="MobiDB-lite"/>
    </source>
</evidence>
<evidence type="ECO:0000305" key="3"/>
<comment type="function">
    <text evidence="1">One of the primary rRNA binding proteins, it binds directly near the 3'-end of the 23S rRNA, where it nucleates assembly of the 50S subunit.</text>
</comment>
<comment type="subunit">
    <text evidence="1">Part of the 50S ribosomal subunit. Forms a cluster with proteins L14 and L19.</text>
</comment>
<comment type="similarity">
    <text evidence="1">Belongs to the universal ribosomal protein uL3 family.</text>
</comment>
<feature type="chain" id="PRO_1000165863" description="Large ribosomal subunit protein uL3">
    <location>
        <begin position="1"/>
        <end position="216"/>
    </location>
</feature>
<feature type="region of interest" description="Disordered" evidence="2">
    <location>
        <begin position="137"/>
        <end position="158"/>
    </location>
</feature>
<sequence>MTATRNVKGLLGTKLGMTQVWDENNKLIPVTVVQADSNVITQLRNAEVDGYVAVQIGYGQIDPRKVTKPLAGHFEKAGVTPRRHVVELRTADAAEYELGQELSVELFAAGQKIDVIGTTKGKGFAGVMKRHGFHGVGASHGAHKNHRKPGSIGGASTPSRVFKGMKMAGRMGAVRHTTLNLTVHAVDAEKSLLLIKGAVPGARGQVVFVRTAVKGA</sequence>
<name>RL3_PSECP</name>
<reference key="1">
    <citation type="submission" date="2009-01" db="EMBL/GenBank/DDBJ databases">
        <title>Complete sequence of chromosome of Arthrobacter chlorophenolicus A6.</title>
        <authorList>
            <consortium name="US DOE Joint Genome Institute"/>
            <person name="Lucas S."/>
            <person name="Copeland A."/>
            <person name="Lapidus A."/>
            <person name="Glavina del Rio T."/>
            <person name="Tice H."/>
            <person name="Bruce D."/>
            <person name="Goodwin L."/>
            <person name="Pitluck S."/>
            <person name="Goltsman E."/>
            <person name="Clum A."/>
            <person name="Larimer F."/>
            <person name="Land M."/>
            <person name="Hauser L."/>
            <person name="Kyrpides N."/>
            <person name="Mikhailova N."/>
            <person name="Jansson J."/>
            <person name="Richardson P."/>
        </authorList>
    </citation>
    <scope>NUCLEOTIDE SEQUENCE [LARGE SCALE GENOMIC DNA]</scope>
    <source>
        <strain>ATCC 700700 / DSM 12829 / CIP 107037 / JCM 12360 / KCTC 9906 / NCIMB 13794 / A6</strain>
    </source>
</reference>
<protein>
    <recommendedName>
        <fullName evidence="1">Large ribosomal subunit protein uL3</fullName>
    </recommendedName>
    <alternativeName>
        <fullName evidence="3">50S ribosomal protein L3</fullName>
    </alternativeName>
</protein>